<evidence type="ECO:0000255" key="1">
    <source>
        <dbReference type="HAMAP-Rule" id="MF_01333"/>
    </source>
</evidence>
<evidence type="ECO:0000305" key="2"/>
<keyword id="KW-1185">Reference proteome</keyword>
<keyword id="KW-0687">Ribonucleoprotein</keyword>
<keyword id="KW-0689">Ribosomal protein</keyword>
<keyword id="KW-0694">RNA-binding</keyword>
<keyword id="KW-0699">rRNA-binding</keyword>
<keyword id="KW-0820">tRNA-binding</keyword>
<gene>
    <name evidence="1" type="primary">rplE</name>
    <name type="ordered locus">Fnod_1126</name>
</gene>
<name>RL5_FERNB</name>
<dbReference type="EMBL" id="CP000771">
    <property type="protein sequence ID" value="ABS60973.1"/>
    <property type="molecule type" value="Genomic_DNA"/>
</dbReference>
<dbReference type="RefSeq" id="WP_011994286.1">
    <property type="nucleotide sequence ID" value="NC_009718.1"/>
</dbReference>
<dbReference type="SMR" id="A7HM40"/>
<dbReference type="STRING" id="381764.Fnod_1126"/>
<dbReference type="KEGG" id="fno:Fnod_1126"/>
<dbReference type="eggNOG" id="COG0094">
    <property type="taxonomic scope" value="Bacteria"/>
</dbReference>
<dbReference type="HOGENOM" id="CLU_061015_2_1_0"/>
<dbReference type="OrthoDB" id="9806626at2"/>
<dbReference type="Proteomes" id="UP000002415">
    <property type="component" value="Chromosome"/>
</dbReference>
<dbReference type="GO" id="GO:1990904">
    <property type="term" value="C:ribonucleoprotein complex"/>
    <property type="evidence" value="ECO:0007669"/>
    <property type="project" value="UniProtKB-KW"/>
</dbReference>
<dbReference type="GO" id="GO:0005840">
    <property type="term" value="C:ribosome"/>
    <property type="evidence" value="ECO:0007669"/>
    <property type="project" value="UniProtKB-KW"/>
</dbReference>
<dbReference type="GO" id="GO:0019843">
    <property type="term" value="F:rRNA binding"/>
    <property type="evidence" value="ECO:0007669"/>
    <property type="project" value="UniProtKB-UniRule"/>
</dbReference>
<dbReference type="GO" id="GO:0003735">
    <property type="term" value="F:structural constituent of ribosome"/>
    <property type="evidence" value="ECO:0007669"/>
    <property type="project" value="InterPro"/>
</dbReference>
<dbReference type="GO" id="GO:0000049">
    <property type="term" value="F:tRNA binding"/>
    <property type="evidence" value="ECO:0007669"/>
    <property type="project" value="UniProtKB-UniRule"/>
</dbReference>
<dbReference type="GO" id="GO:0006412">
    <property type="term" value="P:translation"/>
    <property type="evidence" value="ECO:0007669"/>
    <property type="project" value="UniProtKB-UniRule"/>
</dbReference>
<dbReference type="FunFam" id="3.30.1440.10:FF:000001">
    <property type="entry name" value="50S ribosomal protein L5"/>
    <property type="match status" value="1"/>
</dbReference>
<dbReference type="Gene3D" id="3.30.1440.10">
    <property type="match status" value="1"/>
</dbReference>
<dbReference type="HAMAP" id="MF_01333_B">
    <property type="entry name" value="Ribosomal_uL5_B"/>
    <property type="match status" value="1"/>
</dbReference>
<dbReference type="InterPro" id="IPR002132">
    <property type="entry name" value="Ribosomal_uL5"/>
</dbReference>
<dbReference type="InterPro" id="IPR020930">
    <property type="entry name" value="Ribosomal_uL5_bac-type"/>
</dbReference>
<dbReference type="InterPro" id="IPR031309">
    <property type="entry name" value="Ribosomal_uL5_C"/>
</dbReference>
<dbReference type="InterPro" id="IPR020929">
    <property type="entry name" value="Ribosomal_uL5_CS"/>
</dbReference>
<dbReference type="InterPro" id="IPR022803">
    <property type="entry name" value="Ribosomal_uL5_dom_sf"/>
</dbReference>
<dbReference type="InterPro" id="IPR031310">
    <property type="entry name" value="Ribosomal_uL5_N"/>
</dbReference>
<dbReference type="NCBIfam" id="NF000585">
    <property type="entry name" value="PRK00010.1"/>
    <property type="match status" value="1"/>
</dbReference>
<dbReference type="PANTHER" id="PTHR11994">
    <property type="entry name" value="60S RIBOSOMAL PROTEIN L11-RELATED"/>
    <property type="match status" value="1"/>
</dbReference>
<dbReference type="Pfam" id="PF00281">
    <property type="entry name" value="Ribosomal_L5"/>
    <property type="match status" value="1"/>
</dbReference>
<dbReference type="Pfam" id="PF00673">
    <property type="entry name" value="Ribosomal_L5_C"/>
    <property type="match status" value="1"/>
</dbReference>
<dbReference type="PIRSF" id="PIRSF002161">
    <property type="entry name" value="Ribosomal_L5"/>
    <property type="match status" value="1"/>
</dbReference>
<dbReference type="SUPFAM" id="SSF55282">
    <property type="entry name" value="RL5-like"/>
    <property type="match status" value="1"/>
</dbReference>
<dbReference type="PROSITE" id="PS00358">
    <property type="entry name" value="RIBOSOMAL_L5"/>
    <property type="match status" value="1"/>
</dbReference>
<accession>A7HM40</accession>
<comment type="function">
    <text evidence="1">This is one of the proteins that bind and probably mediate the attachment of the 5S RNA into the large ribosomal subunit, where it forms part of the central protuberance. In the 70S ribosome it contacts protein S13 of the 30S subunit (bridge B1b), connecting the 2 subunits; this bridge is implicated in subunit movement. Contacts the P site tRNA; the 5S rRNA and some of its associated proteins might help stabilize positioning of ribosome-bound tRNAs.</text>
</comment>
<comment type="subunit">
    <text evidence="1">Part of the 50S ribosomal subunit; part of the 5S rRNA/L5/L18/L25 subcomplex. Contacts the 5S rRNA and the P site tRNA. Forms a bridge to the 30S subunit in the 70S ribosome.</text>
</comment>
<comment type="similarity">
    <text evidence="1">Belongs to the universal ribosomal protein uL5 family.</text>
</comment>
<feature type="chain" id="PRO_1000073287" description="Large ribosomal subunit protein uL5">
    <location>
        <begin position="1"/>
        <end position="184"/>
    </location>
</feature>
<protein>
    <recommendedName>
        <fullName evidence="1">Large ribosomal subunit protein uL5</fullName>
    </recommendedName>
    <alternativeName>
        <fullName evidence="2">50S ribosomal protein L5</fullName>
    </alternativeName>
</protein>
<reference key="1">
    <citation type="submission" date="2007-07" db="EMBL/GenBank/DDBJ databases">
        <title>Complete sequence of Fervidobacterium nodosum Rt17-B1.</title>
        <authorList>
            <consortium name="US DOE Joint Genome Institute"/>
            <person name="Copeland A."/>
            <person name="Lucas S."/>
            <person name="Lapidus A."/>
            <person name="Barry K."/>
            <person name="Glavina del Rio T."/>
            <person name="Dalin E."/>
            <person name="Tice H."/>
            <person name="Pitluck S."/>
            <person name="Saunders E."/>
            <person name="Brettin T."/>
            <person name="Bruce D."/>
            <person name="Detter J.C."/>
            <person name="Han C."/>
            <person name="Schmutz J."/>
            <person name="Larimer F."/>
            <person name="Land M."/>
            <person name="Hauser L."/>
            <person name="Kyrpides N."/>
            <person name="Mikhailova N."/>
            <person name="Nelson K."/>
            <person name="Gogarten J.P."/>
            <person name="Noll K."/>
            <person name="Richardson P."/>
        </authorList>
    </citation>
    <scope>NUCLEOTIDE SEQUENCE [LARGE SCALE GENOMIC DNA]</scope>
    <source>
        <strain>ATCC 35602 / DSM 5306 / Rt17-B1</strain>
    </source>
</reference>
<proteinExistence type="inferred from homology"/>
<organism>
    <name type="scientific">Fervidobacterium nodosum (strain ATCC 35602 / DSM 5306 / Rt17-B1)</name>
    <dbReference type="NCBI Taxonomy" id="381764"/>
    <lineage>
        <taxon>Bacteria</taxon>
        <taxon>Thermotogati</taxon>
        <taxon>Thermotogota</taxon>
        <taxon>Thermotogae</taxon>
        <taxon>Thermotogales</taxon>
        <taxon>Fervidobacteriaceae</taxon>
        <taxon>Fervidobacterium</taxon>
    </lineage>
</organism>
<sequence>MAYEFVPLKEKYQKEVVPVLMKEFGYKNIHEVPRLVKVVINMGVGEGSRNKDVIEAHARELTTIAGQKAIITKAKKSISNFKIRKGMSVGVKVTLRGPRMYNFVYKLVNLVLPKVRDFRGLNPNSFDGKGNYSFGLTEQLVFPEISPDQIKRIQGMDIVVVTTAKRDEEARRLLELLGFPFKKQ</sequence>